<evidence type="ECO:0000255" key="1">
    <source>
        <dbReference type="HAMAP-Rule" id="MF_03115"/>
    </source>
</evidence>
<evidence type="ECO:0000256" key="2">
    <source>
        <dbReference type="SAM" id="MobiDB-lite"/>
    </source>
</evidence>
<sequence>MAPSVTIDNSSDFSPITTNFKTTSFNPRTLLLAPPSIASHEEKLRNVLATHDRTVTDLQMLDRLSAGLVTLPESTYDLVLILTDADGTRVESKGLLTRDVFGKITQALKAGAKLQAQDGTFGQEIDGAEYQEAILSGLVAEGGVMLKPDYSASVAVPLRLRRKDNSKNAAVSSAGPAVSMAAVPLHGKRKSVDMTDDVPEKDVPKVDSPKNDAPKGVGFIDFSDDFDAEDDDDELIDEDTLLTEEDMKKPLAIPPECAPRAGKRRRACKDCTCGLAEKLAKEDADKRATADSQLQALKLDADDLAEVDFTVQGKVGSCGNCSLGDAFRCDGCPYIGMPAFKPGEEVRLLNNDVQL</sequence>
<accession>A6SCX6</accession>
<accession>A0A384JEM2</accession>
<dbReference type="EMBL" id="CP009808">
    <property type="protein sequence ID" value="ATZ48932.1"/>
    <property type="molecule type" value="Genomic_DNA"/>
</dbReference>
<dbReference type="EnsemblFungi" id="Bcin04g01420.1">
    <property type="protein sequence ID" value="Bcin04p01420.1"/>
    <property type="gene ID" value="Bcin04g01420"/>
</dbReference>
<dbReference type="GeneID" id="5431395"/>
<dbReference type="KEGG" id="bfu:BCIN_04g01420"/>
<dbReference type="VEuPathDB" id="FungiDB:Bcin04g01420"/>
<dbReference type="OMA" id="DFVMPVT"/>
<dbReference type="OrthoDB" id="311633at2759"/>
<dbReference type="Proteomes" id="UP000001798">
    <property type="component" value="Chromosome bcin04"/>
</dbReference>
<dbReference type="GO" id="GO:0005758">
    <property type="term" value="C:mitochondrial intermembrane space"/>
    <property type="evidence" value="ECO:0007669"/>
    <property type="project" value="UniProtKB-SubCell"/>
</dbReference>
<dbReference type="GO" id="GO:0051537">
    <property type="term" value="F:2 iron, 2 sulfur cluster binding"/>
    <property type="evidence" value="ECO:0007669"/>
    <property type="project" value="UniProtKB-UniRule"/>
</dbReference>
<dbReference type="GO" id="GO:0051539">
    <property type="term" value="F:4 iron, 4 sulfur cluster binding"/>
    <property type="evidence" value="ECO:0007669"/>
    <property type="project" value="UniProtKB-KW"/>
</dbReference>
<dbReference type="GO" id="GO:0009055">
    <property type="term" value="F:electron transfer activity"/>
    <property type="evidence" value="ECO:0007669"/>
    <property type="project" value="UniProtKB-UniRule"/>
</dbReference>
<dbReference type="GO" id="GO:0046872">
    <property type="term" value="F:metal ion binding"/>
    <property type="evidence" value="ECO:0007669"/>
    <property type="project" value="UniProtKB-KW"/>
</dbReference>
<dbReference type="GO" id="GO:0016226">
    <property type="term" value="P:iron-sulfur cluster assembly"/>
    <property type="evidence" value="ECO:0007669"/>
    <property type="project" value="UniProtKB-UniRule"/>
</dbReference>
<dbReference type="FunFam" id="3.40.50.11000:FF:000002">
    <property type="entry name" value="Fe-S cluster assembly protein DRE2"/>
    <property type="match status" value="1"/>
</dbReference>
<dbReference type="Gene3D" id="3.40.50.11000">
    <property type="entry name" value="Fe-S cluster assembly protein Dre2, N-terminal domain"/>
    <property type="match status" value="1"/>
</dbReference>
<dbReference type="HAMAP" id="MF_03115">
    <property type="entry name" value="Anamorsin"/>
    <property type="match status" value="1"/>
</dbReference>
<dbReference type="InterPro" id="IPR007785">
    <property type="entry name" value="Anamorsin"/>
</dbReference>
<dbReference type="InterPro" id="IPR046408">
    <property type="entry name" value="CIAPIN1"/>
</dbReference>
<dbReference type="InterPro" id="IPR031838">
    <property type="entry name" value="Dre2_N"/>
</dbReference>
<dbReference type="PANTHER" id="PTHR13273">
    <property type="entry name" value="ANAMORSIN"/>
    <property type="match status" value="1"/>
</dbReference>
<dbReference type="PANTHER" id="PTHR13273:SF14">
    <property type="entry name" value="ANAMORSIN"/>
    <property type="match status" value="1"/>
</dbReference>
<dbReference type="Pfam" id="PF05093">
    <property type="entry name" value="CIAPIN1"/>
    <property type="match status" value="1"/>
</dbReference>
<dbReference type="Pfam" id="PF16803">
    <property type="entry name" value="DRE2_N"/>
    <property type="match status" value="1"/>
</dbReference>
<keyword id="KW-0001">2Fe-2S</keyword>
<keyword id="KW-0004">4Fe-4S</keyword>
<keyword id="KW-0963">Cytoplasm</keyword>
<keyword id="KW-0408">Iron</keyword>
<keyword id="KW-0411">Iron-sulfur</keyword>
<keyword id="KW-0479">Metal-binding</keyword>
<keyword id="KW-0496">Mitochondrion</keyword>
<keyword id="KW-1185">Reference proteome</keyword>
<proteinExistence type="inferred from homology"/>
<gene>
    <name evidence="1" type="primary">DRE2</name>
    <name type="ORF">BC1G_10618</name>
    <name type="ORF">BCIN_04g01420</name>
</gene>
<name>DRE2_BOTFB</name>
<reference key="1">
    <citation type="journal article" date="2011" name="PLoS Genet.">
        <title>Genomic analysis of the necrotrophic fungal pathogens Sclerotinia sclerotiorum and Botrytis cinerea.</title>
        <authorList>
            <person name="Amselem J."/>
            <person name="Cuomo C.A."/>
            <person name="van Kan J.A.L."/>
            <person name="Viaud M."/>
            <person name="Benito E.P."/>
            <person name="Couloux A."/>
            <person name="Coutinho P.M."/>
            <person name="de Vries R.P."/>
            <person name="Dyer P.S."/>
            <person name="Fillinger S."/>
            <person name="Fournier E."/>
            <person name="Gout L."/>
            <person name="Hahn M."/>
            <person name="Kohn L."/>
            <person name="Lapalu N."/>
            <person name="Plummer K.M."/>
            <person name="Pradier J.-M."/>
            <person name="Quevillon E."/>
            <person name="Sharon A."/>
            <person name="Simon A."/>
            <person name="ten Have A."/>
            <person name="Tudzynski B."/>
            <person name="Tudzynski P."/>
            <person name="Wincker P."/>
            <person name="Andrew M."/>
            <person name="Anthouard V."/>
            <person name="Beever R.E."/>
            <person name="Beffa R."/>
            <person name="Benoit I."/>
            <person name="Bouzid O."/>
            <person name="Brault B."/>
            <person name="Chen Z."/>
            <person name="Choquer M."/>
            <person name="Collemare J."/>
            <person name="Cotton P."/>
            <person name="Danchin E.G."/>
            <person name="Da Silva C."/>
            <person name="Gautier A."/>
            <person name="Giraud C."/>
            <person name="Giraud T."/>
            <person name="Gonzalez C."/>
            <person name="Grossetete S."/>
            <person name="Gueldener U."/>
            <person name="Henrissat B."/>
            <person name="Howlett B.J."/>
            <person name="Kodira C."/>
            <person name="Kretschmer M."/>
            <person name="Lappartient A."/>
            <person name="Leroch M."/>
            <person name="Levis C."/>
            <person name="Mauceli E."/>
            <person name="Neuveglise C."/>
            <person name="Oeser B."/>
            <person name="Pearson M."/>
            <person name="Poulain J."/>
            <person name="Poussereau N."/>
            <person name="Quesneville H."/>
            <person name="Rascle C."/>
            <person name="Schumacher J."/>
            <person name="Segurens B."/>
            <person name="Sexton A."/>
            <person name="Silva E."/>
            <person name="Sirven C."/>
            <person name="Soanes D.M."/>
            <person name="Talbot N.J."/>
            <person name="Templeton M."/>
            <person name="Yandava C."/>
            <person name="Yarden O."/>
            <person name="Zeng Q."/>
            <person name="Rollins J.A."/>
            <person name="Lebrun M.-H."/>
            <person name="Dickman M."/>
        </authorList>
    </citation>
    <scope>NUCLEOTIDE SEQUENCE [LARGE SCALE GENOMIC DNA]</scope>
    <source>
        <strain>B05.10</strain>
    </source>
</reference>
<reference key="2">
    <citation type="journal article" date="2012" name="Eukaryot. Cell">
        <title>Genome update of Botrytis cinerea strains B05.10 and T4.</title>
        <authorList>
            <person name="Staats M."/>
            <person name="van Kan J.A.L."/>
        </authorList>
    </citation>
    <scope>NUCLEOTIDE SEQUENCE [LARGE SCALE GENOMIC DNA]</scope>
    <scope>GENOME REANNOTATION</scope>
    <source>
        <strain>B05.10</strain>
    </source>
</reference>
<reference key="3">
    <citation type="journal article" date="2017" name="Mol. Plant Pathol.">
        <title>A gapless genome sequence of the fungus Botrytis cinerea.</title>
        <authorList>
            <person name="van Kan J.A.L."/>
            <person name="Stassen J.H.M."/>
            <person name="Mosbach A."/>
            <person name="van der Lee T.A.J."/>
            <person name="Faino L."/>
            <person name="Farmer A.D."/>
            <person name="Papasotiriou D.G."/>
            <person name="Zhou S."/>
            <person name="Seidl M.F."/>
            <person name="Cottam E."/>
            <person name="Edel D."/>
            <person name="Hahn M."/>
            <person name="Schwartz D.C."/>
            <person name="Dietrich R.A."/>
            <person name="Widdison S."/>
            <person name="Scalliet G."/>
        </authorList>
    </citation>
    <scope>NUCLEOTIDE SEQUENCE [LARGE SCALE GENOMIC DNA]</scope>
    <scope>GENOME REANNOTATION</scope>
    <source>
        <strain>B05.10</strain>
    </source>
</reference>
<protein>
    <recommendedName>
        <fullName evidence="1">Fe-S cluster assembly protein DRE2</fullName>
    </recommendedName>
    <alternativeName>
        <fullName evidence="1">Anamorsin homolog</fullName>
    </alternativeName>
</protein>
<comment type="function">
    <text evidence="1">Component of the cytosolic iron-sulfur (Fe-S) protein assembly (CIA) machinery required for the maturation of extramitochondrial Fe-S proteins. Part of an electron transfer chain functioning in an early step of cytosolic Fe-S biogenesis, facilitating the de novo assembly of a [4Fe-4S] cluster on the scaffold complex CFD1-NBP35. Electrons are transferred to DRE2 from NADPH via the FAD- and FMN-containing protein TAH18. TAH18-DRE2 are also required for the assembly of the diferric tyrosyl radical cofactor of ribonucleotide reductase (RNR), probably by providing electrons for reduction during radical cofactor maturation in the catalytic small subunit RNR2.</text>
</comment>
<comment type="cofactor">
    <cofactor evidence="1">
        <name>[2Fe-2S] cluster</name>
        <dbReference type="ChEBI" id="CHEBI:190135"/>
    </cofactor>
</comment>
<comment type="cofactor">
    <cofactor evidence="1">
        <name>[4Fe-4S] cluster</name>
        <dbReference type="ChEBI" id="CHEBI:49883"/>
    </cofactor>
</comment>
<comment type="subunit">
    <text evidence="1">Monomer. Interacts with TAH18. Interacts with MIA40.</text>
</comment>
<comment type="subcellular location">
    <subcellularLocation>
        <location evidence="1">Cytoplasm</location>
    </subcellularLocation>
    <subcellularLocation>
        <location evidence="1">Mitochondrion intermembrane space</location>
    </subcellularLocation>
</comment>
<comment type="domain">
    <text evidence="1">The C-terminal domain binds 2 Fe-S clusters but is otherwise mostly in an intrinsically disordered conformation.</text>
</comment>
<comment type="domain">
    <text evidence="1">The N-terminal domain has structural similarity with S-adenosyl-L-methionine-dependent methyltransferases, but does not bind S-adenosyl-L-methionine. It is required for correct assembly of the 2 Fe-S clusters.</text>
</comment>
<comment type="domain">
    <text evidence="1">The twin Cx2C motifs are involved in the recognition by the mitochondrial MIA40-ERV1 disulfide relay system. The formation of 2 disulfide bonds in the Cx2C motifs through dithiol/disulfide exchange reactions effectively traps the protein in the mitochondrial intermembrane space.</text>
</comment>
<comment type="similarity">
    <text evidence="1">Belongs to the anamorsin family.</text>
</comment>
<organism>
    <name type="scientific">Botryotinia fuckeliana (strain B05.10)</name>
    <name type="common">Noble rot fungus</name>
    <name type="synonym">Botrytis cinerea</name>
    <dbReference type="NCBI Taxonomy" id="332648"/>
    <lineage>
        <taxon>Eukaryota</taxon>
        <taxon>Fungi</taxon>
        <taxon>Dikarya</taxon>
        <taxon>Ascomycota</taxon>
        <taxon>Pezizomycotina</taxon>
        <taxon>Leotiomycetes</taxon>
        <taxon>Helotiales</taxon>
        <taxon>Sclerotiniaceae</taxon>
        <taxon>Botrytis</taxon>
    </lineage>
</organism>
<feature type="chain" id="PRO_0000324859" description="Fe-S cluster assembly protein DRE2">
    <location>
        <begin position="1"/>
        <end position="355"/>
    </location>
</feature>
<feature type="region of interest" description="N-terminal SAM-like domain" evidence="1">
    <location>
        <begin position="23"/>
        <end position="156"/>
    </location>
</feature>
<feature type="region of interest" description="Linker" evidence="1">
    <location>
        <begin position="157"/>
        <end position="247"/>
    </location>
</feature>
<feature type="region of interest" description="Disordered" evidence="2">
    <location>
        <begin position="189"/>
        <end position="214"/>
    </location>
</feature>
<feature type="region of interest" description="Fe-S binding site A" evidence="1">
    <location>
        <begin position="257"/>
        <end position="273"/>
    </location>
</feature>
<feature type="region of interest" description="Fe-S binding site B" evidence="1">
    <location>
        <begin position="318"/>
        <end position="332"/>
    </location>
</feature>
<feature type="short sequence motif" description="Cx2C motif 1" evidence="1">
    <location>
        <begin position="318"/>
        <end position="321"/>
    </location>
</feature>
<feature type="short sequence motif" description="Cx2C motif 2" evidence="1">
    <location>
        <begin position="329"/>
        <end position="332"/>
    </location>
</feature>
<feature type="compositionally biased region" description="Basic and acidic residues" evidence="2">
    <location>
        <begin position="190"/>
        <end position="213"/>
    </location>
</feature>
<feature type="binding site" evidence="1">
    <location>
        <position position="257"/>
    </location>
    <ligand>
        <name>[2Fe-2S] cluster</name>
        <dbReference type="ChEBI" id="CHEBI:190135"/>
    </ligand>
</feature>
<feature type="binding site" evidence="1">
    <location>
        <position position="268"/>
    </location>
    <ligand>
        <name>[2Fe-2S] cluster</name>
        <dbReference type="ChEBI" id="CHEBI:190135"/>
    </ligand>
</feature>
<feature type="binding site" evidence="1">
    <location>
        <position position="271"/>
    </location>
    <ligand>
        <name>[2Fe-2S] cluster</name>
        <dbReference type="ChEBI" id="CHEBI:190135"/>
    </ligand>
</feature>
<feature type="binding site" evidence="1">
    <location>
        <position position="273"/>
    </location>
    <ligand>
        <name>[2Fe-2S] cluster</name>
        <dbReference type="ChEBI" id="CHEBI:190135"/>
    </ligand>
</feature>
<feature type="binding site" evidence="1">
    <location>
        <position position="318"/>
    </location>
    <ligand>
        <name>[4Fe-4S] cluster</name>
        <dbReference type="ChEBI" id="CHEBI:49883"/>
    </ligand>
</feature>
<feature type="binding site" evidence="1">
    <location>
        <position position="321"/>
    </location>
    <ligand>
        <name>[4Fe-4S] cluster</name>
        <dbReference type="ChEBI" id="CHEBI:49883"/>
    </ligand>
</feature>
<feature type="binding site" evidence="1">
    <location>
        <position position="329"/>
    </location>
    <ligand>
        <name>[4Fe-4S] cluster</name>
        <dbReference type="ChEBI" id="CHEBI:49883"/>
    </ligand>
</feature>
<feature type="binding site" evidence="1">
    <location>
        <position position="332"/>
    </location>
    <ligand>
        <name>[4Fe-4S] cluster</name>
        <dbReference type="ChEBI" id="CHEBI:49883"/>
    </ligand>
</feature>